<protein>
    <recommendedName>
        <fullName evidence="9">Aminotransferase swnA</fullName>
        <ecNumber evidence="10">2.6.1.-</ecNumber>
    </recommendedName>
    <alternativeName>
        <fullName evidence="9">Swainsonine biosynthesis gene cluster protein A</fullName>
    </alternativeName>
</protein>
<sequence>MHLEFEKAHDVLLEDVRDTVNIRQTHFSSPKRLANRWDHRLSDESLSQGASPLKNSVKTATTSVPIPLGVGRPASLFYPWQSMTMTGTKESNTRNPMTCNIGEAAFDISSALNYADPSGSTELVACFRENTRLIHNPPYQDWDTTLTCGSTSAIDIVLRMLCNRGDWILAEASTYTGTVMAAKAHGLNIQSIEMDEEGLLPVDLDNKLRYWDTSRSRKPFVLYTIPSGHNPTGITQSTARKAAIYQIAERHDLLVLEDDPYFFLRLDGSFSSLDINPPYSSFEKLRKSLPSSYLSLDKSGRVIRVDSTSKILAPGLRCGWLTASKQIVEIFENFAEVGPAPPSGPSQVMLYKLFVESWGQEGFANWLNHLSGEYKSRRDIMIAACSQHLPKGLCTWTTPTHGMFLWITIDLARHPDYSEKRENLSLDLEDKIYERAASYGVAVAKGSWFNVEACLDKVFFRITFVSTTCLDDLENGVKRLGAAVRDEFRFTQA</sequence>
<evidence type="ECO:0000250" key="1">
    <source>
        <dbReference type="UniProtKB" id="E9F8L8"/>
    </source>
</evidence>
<evidence type="ECO:0000250" key="2">
    <source>
        <dbReference type="UniProtKB" id="E9F8L9"/>
    </source>
</evidence>
<evidence type="ECO:0000250" key="3">
    <source>
        <dbReference type="UniProtKB" id="E9F8M1"/>
    </source>
</evidence>
<evidence type="ECO:0000250" key="4">
    <source>
        <dbReference type="UniProtKB" id="E9F8M3"/>
    </source>
</evidence>
<evidence type="ECO:0000250" key="5">
    <source>
        <dbReference type="UniProtKB" id="E9F8M4"/>
    </source>
</evidence>
<evidence type="ECO:0000250" key="6">
    <source>
        <dbReference type="UniProtKB" id="P00509"/>
    </source>
</evidence>
<evidence type="ECO:0000255" key="7"/>
<evidence type="ECO:0000269" key="8">
    <source>
    </source>
</evidence>
<evidence type="ECO:0000303" key="9">
    <source>
    </source>
</evidence>
<evidence type="ECO:0000305" key="10">
    <source>
    </source>
</evidence>
<accession>D4AU29</accession>
<name>SWNA_ARTBC</name>
<keyword id="KW-0032">Aminotransferase</keyword>
<keyword id="KW-0663">Pyridoxal phosphate</keyword>
<keyword id="KW-1185">Reference proteome</keyword>
<keyword id="KW-0808">Transferase</keyword>
<dbReference type="EC" id="2.6.1.-" evidence="10"/>
<dbReference type="EMBL" id="ABSU01000010">
    <property type="protein sequence ID" value="EFE33482.1"/>
    <property type="molecule type" value="Genomic_DNA"/>
</dbReference>
<dbReference type="RefSeq" id="XP_003014122.1">
    <property type="nucleotide sequence ID" value="XM_003014076.1"/>
</dbReference>
<dbReference type="SMR" id="D4AU29"/>
<dbReference type="STRING" id="663331.D4AU29"/>
<dbReference type="GeneID" id="9521539"/>
<dbReference type="KEGG" id="abe:ARB_07842"/>
<dbReference type="eggNOG" id="KOG0634">
    <property type="taxonomic scope" value="Eukaryota"/>
</dbReference>
<dbReference type="HOGENOM" id="CLU_017584_0_5_1"/>
<dbReference type="OMA" id="PYFFLRL"/>
<dbReference type="OrthoDB" id="691673at2759"/>
<dbReference type="Proteomes" id="UP000008866">
    <property type="component" value="Unassembled WGS sequence"/>
</dbReference>
<dbReference type="GO" id="GO:0047536">
    <property type="term" value="F:2-aminoadipate transaminase activity"/>
    <property type="evidence" value="ECO:0007669"/>
    <property type="project" value="TreeGrafter"/>
</dbReference>
<dbReference type="GO" id="GO:0008793">
    <property type="term" value="F:aromatic-amino-acid transaminase activity"/>
    <property type="evidence" value="ECO:0007669"/>
    <property type="project" value="TreeGrafter"/>
</dbReference>
<dbReference type="GO" id="GO:0030170">
    <property type="term" value="F:pyridoxal phosphate binding"/>
    <property type="evidence" value="ECO:0007669"/>
    <property type="project" value="InterPro"/>
</dbReference>
<dbReference type="GO" id="GO:0009074">
    <property type="term" value="P:aromatic amino acid family catabolic process"/>
    <property type="evidence" value="ECO:0007669"/>
    <property type="project" value="TreeGrafter"/>
</dbReference>
<dbReference type="GO" id="GO:0019878">
    <property type="term" value="P:lysine biosynthetic process via aminoadipic acid"/>
    <property type="evidence" value="ECO:0007669"/>
    <property type="project" value="TreeGrafter"/>
</dbReference>
<dbReference type="GO" id="GO:0006571">
    <property type="term" value="P:tyrosine biosynthetic process"/>
    <property type="evidence" value="ECO:0007669"/>
    <property type="project" value="TreeGrafter"/>
</dbReference>
<dbReference type="CDD" id="cd00609">
    <property type="entry name" value="AAT_like"/>
    <property type="match status" value="1"/>
</dbReference>
<dbReference type="Gene3D" id="3.40.640.10">
    <property type="entry name" value="Type I PLP-dependent aspartate aminotransferase-like (Major domain)"/>
    <property type="match status" value="1"/>
</dbReference>
<dbReference type="InterPro" id="IPR004839">
    <property type="entry name" value="Aminotransferase_I/II_large"/>
</dbReference>
<dbReference type="InterPro" id="IPR050859">
    <property type="entry name" value="Class-I_PLP-dep_aminotransf"/>
</dbReference>
<dbReference type="InterPro" id="IPR015424">
    <property type="entry name" value="PyrdxlP-dep_Trfase"/>
</dbReference>
<dbReference type="InterPro" id="IPR015421">
    <property type="entry name" value="PyrdxlP-dep_Trfase_major"/>
</dbReference>
<dbReference type="PANTHER" id="PTHR42790">
    <property type="entry name" value="AMINOTRANSFERASE"/>
    <property type="match status" value="1"/>
</dbReference>
<dbReference type="PANTHER" id="PTHR42790:SF21">
    <property type="entry name" value="AROMATIC_AMINOADIPATE AMINOTRANSFERASE 1"/>
    <property type="match status" value="1"/>
</dbReference>
<dbReference type="Pfam" id="PF00155">
    <property type="entry name" value="Aminotran_1_2"/>
    <property type="match status" value="1"/>
</dbReference>
<dbReference type="SUPFAM" id="SSF53383">
    <property type="entry name" value="PLP-dependent transferases"/>
    <property type="match status" value="1"/>
</dbReference>
<gene>
    <name evidence="9" type="primary">swnA</name>
    <name type="ORF">ARB_07842</name>
</gene>
<comment type="function">
    <text evidence="1 2 3 4 5 8">Aminotransferase; part of the gene cluster that mediates the biosynthesis of swainsonine (SW), a cytotoxic fungal alkaloid and a potential cancer therapy drug (PubMed:28381497). Swainsonine production occurs via a multibranched pathway and is dispensable for fungal colonization of plants and infection of insect hosts (By similarity). The first step of swainsonine biosynthesis is the production of the precursor pipecolic acid (PA) via conversion of L-lysine (Lys) to 1-piperideine-6-carboxylate (P6C) by the aminotransferase swnA, the latter being further reduced to PA by the reductase swnR (By similarity). The PKS-NRPS hybrid synthetase swnK uptakes and condensates PA and malonyl-CoA with and without skipping of the ketoreductase (KR) domain in order to produce 3 intermediates, 1-oxoindolizidine, (1S)-1-hydroxyindolizin, and (1R)-1-hydroxyindolizine; with the transisomer (1S)-1-hydroxyindolizin being predominant (By similarity). The terminal thioester reductase (TE) domain of swnK is involved in reduction of the thioester bond to release the intermediate aldehydes (By similarity). The oxidoreductase swnN could contribute to the reduction of 1-oxoindolizidine to (1S)-1-hydroxyindolizin and (1R)-1-hydroxyindolizine, contributing to the major route of SW production (By similarity). The dioxygenase swnH2 would be responsible for the oxidization of (1R)-1-hydroxyindolizine into (1R,2S)-1,2-dihydroxyindolizine and of (1S)-1-hydroxyindolizin to yield both (1R,2S)-1,2-dihydroxyindolizine and (1S,2S)-1,2-dihydroxyindolizine (By similarity). The dioxygenase swnH1 then performs the conversion of the 1,2-dihydroxyindolizine epimers to SW (By similarity).</text>
</comment>
<comment type="cofactor">
    <cofactor evidence="6">
        <name>pyridoxal 5'-phosphate</name>
        <dbReference type="ChEBI" id="CHEBI:597326"/>
    </cofactor>
</comment>
<comment type="pathway">
    <text evidence="10">Mycotoxin biosynthesis.</text>
</comment>
<comment type="similarity">
    <text evidence="7">Belongs to the class-I pyridoxal-phosphate-dependent aminotransferase family.</text>
</comment>
<reference key="1">
    <citation type="journal article" date="2011" name="Genome Biol.">
        <title>Comparative and functional genomics provide insights into the pathogenicity of dermatophytic fungi.</title>
        <authorList>
            <person name="Burmester A."/>
            <person name="Shelest E."/>
            <person name="Gloeckner G."/>
            <person name="Heddergott C."/>
            <person name="Schindler S."/>
            <person name="Staib P."/>
            <person name="Heidel A."/>
            <person name="Felder M."/>
            <person name="Petzold A."/>
            <person name="Szafranski K."/>
            <person name="Feuermann M."/>
            <person name="Pedruzzi I."/>
            <person name="Priebe S."/>
            <person name="Groth M."/>
            <person name="Winkler R."/>
            <person name="Li W."/>
            <person name="Kniemeyer O."/>
            <person name="Schroeckh V."/>
            <person name="Hertweck C."/>
            <person name="Hube B."/>
            <person name="White T.C."/>
            <person name="Platzer M."/>
            <person name="Guthke R."/>
            <person name="Heitman J."/>
            <person name="Woestemeyer J."/>
            <person name="Zipfel P.F."/>
            <person name="Monod M."/>
            <person name="Brakhage A.A."/>
        </authorList>
    </citation>
    <scope>NUCLEOTIDE SEQUENCE [LARGE SCALE GENOMIC DNA]</scope>
    <source>
        <strain>ATCC MYA-4681 / CBS 112371</strain>
    </source>
</reference>
<reference key="2">
    <citation type="journal article" date="2017" name="G3 (Bethesda)">
        <title>Swainsonine biosynthesis genes in diverse symbiotic and pathogenic fungi.</title>
        <authorList>
            <person name="Cook D."/>
            <person name="Donzelli B.G."/>
            <person name="Creamer R."/>
            <person name="Baucom D.L."/>
            <person name="Gardner D.R."/>
            <person name="Pan J."/>
            <person name="Moore N."/>
            <person name="Jaromczyk J.W."/>
            <person name="Schardl C.L."/>
        </authorList>
    </citation>
    <scope>IDENTIFICATION</scope>
    <scope>PATHWAY</scope>
</reference>
<proteinExistence type="inferred from homology"/>
<feature type="chain" id="PRO_0000441181" description="Aminotransferase swnA">
    <location>
        <begin position="1"/>
        <end position="493"/>
    </location>
</feature>
<organism>
    <name type="scientific">Arthroderma benhamiae (strain ATCC MYA-4681 / CBS 112371)</name>
    <name type="common">Trichophyton mentagrophytes</name>
    <dbReference type="NCBI Taxonomy" id="663331"/>
    <lineage>
        <taxon>Eukaryota</taxon>
        <taxon>Fungi</taxon>
        <taxon>Dikarya</taxon>
        <taxon>Ascomycota</taxon>
        <taxon>Pezizomycotina</taxon>
        <taxon>Eurotiomycetes</taxon>
        <taxon>Eurotiomycetidae</taxon>
        <taxon>Onygenales</taxon>
        <taxon>Arthrodermataceae</taxon>
        <taxon>Trichophyton</taxon>
    </lineage>
</organism>